<comment type="function">
    <text evidence="2">Catalyzes the formation of N(7)-methylguanine at position 46 (m7G46) in tRNA.</text>
</comment>
<comment type="catalytic activity">
    <reaction evidence="2">
        <text>guanosine(46) in tRNA + S-adenosyl-L-methionine = N(7)-methylguanosine(46) in tRNA + S-adenosyl-L-homocysteine</text>
        <dbReference type="Rhea" id="RHEA:42708"/>
        <dbReference type="Rhea" id="RHEA-COMP:10188"/>
        <dbReference type="Rhea" id="RHEA-COMP:10189"/>
        <dbReference type="ChEBI" id="CHEBI:57856"/>
        <dbReference type="ChEBI" id="CHEBI:59789"/>
        <dbReference type="ChEBI" id="CHEBI:74269"/>
        <dbReference type="ChEBI" id="CHEBI:74480"/>
        <dbReference type="EC" id="2.1.1.33"/>
    </reaction>
</comment>
<comment type="pathway">
    <text evidence="2">tRNA modification; N(7)-methylguanine-tRNA biosynthesis.</text>
</comment>
<comment type="similarity">
    <text evidence="2">Belongs to the class I-like SAM-binding methyltransferase superfamily. TrmB family.</text>
</comment>
<reference key="1">
    <citation type="journal article" date="2002" name="Proc. Natl. Acad. Sci. U.S.A.">
        <title>Genome sequence of Streptococcus mutans UA159, a cariogenic dental pathogen.</title>
        <authorList>
            <person name="Ajdic D.J."/>
            <person name="McShan W.M."/>
            <person name="McLaughlin R.E."/>
            <person name="Savic G."/>
            <person name="Chang J."/>
            <person name="Carson M.B."/>
            <person name="Primeaux C."/>
            <person name="Tian R."/>
            <person name="Kenton S."/>
            <person name="Jia H.G."/>
            <person name="Lin S.P."/>
            <person name="Qian Y."/>
            <person name="Li S."/>
            <person name="Zhu H."/>
            <person name="Najar F.Z."/>
            <person name="Lai H."/>
            <person name="White J."/>
            <person name="Roe B.A."/>
            <person name="Ferretti J.J."/>
        </authorList>
    </citation>
    <scope>NUCLEOTIDE SEQUENCE [LARGE SCALE GENOMIC DNA]</scope>
    <source>
        <strain>ATCC 700610 / UA159</strain>
    </source>
</reference>
<keyword id="KW-0489">Methyltransferase</keyword>
<keyword id="KW-1185">Reference proteome</keyword>
<keyword id="KW-0949">S-adenosyl-L-methionine</keyword>
<keyword id="KW-0808">Transferase</keyword>
<keyword id="KW-0819">tRNA processing</keyword>
<organism>
    <name type="scientific">Streptococcus mutans serotype c (strain ATCC 700610 / UA159)</name>
    <dbReference type="NCBI Taxonomy" id="210007"/>
    <lineage>
        <taxon>Bacteria</taxon>
        <taxon>Bacillati</taxon>
        <taxon>Bacillota</taxon>
        <taxon>Bacilli</taxon>
        <taxon>Lactobacillales</taxon>
        <taxon>Streptococcaceae</taxon>
        <taxon>Streptococcus</taxon>
    </lineage>
</organism>
<name>TRMB_STRMU</name>
<dbReference type="EC" id="2.1.1.33" evidence="2"/>
<dbReference type="EMBL" id="AE014133">
    <property type="protein sequence ID" value="AAN58170.1"/>
    <property type="molecule type" value="Genomic_DNA"/>
</dbReference>
<dbReference type="RefSeq" id="NP_720864.1">
    <property type="nucleotide sequence ID" value="NC_004350.2"/>
</dbReference>
<dbReference type="RefSeq" id="WP_002262605.1">
    <property type="nucleotide sequence ID" value="NC_004350.2"/>
</dbReference>
<dbReference type="SMR" id="Q8DVQ4"/>
<dbReference type="STRING" id="210007.SMU_416"/>
<dbReference type="KEGG" id="smu:SMU_416"/>
<dbReference type="PATRIC" id="fig|210007.7.peg.366"/>
<dbReference type="eggNOG" id="COG0220">
    <property type="taxonomic scope" value="Bacteria"/>
</dbReference>
<dbReference type="HOGENOM" id="CLU_050910_2_1_9"/>
<dbReference type="OrthoDB" id="9802090at2"/>
<dbReference type="PhylomeDB" id="Q8DVQ4"/>
<dbReference type="UniPathway" id="UPA00989"/>
<dbReference type="Proteomes" id="UP000002512">
    <property type="component" value="Chromosome"/>
</dbReference>
<dbReference type="GO" id="GO:0043527">
    <property type="term" value="C:tRNA methyltransferase complex"/>
    <property type="evidence" value="ECO:0007669"/>
    <property type="project" value="TreeGrafter"/>
</dbReference>
<dbReference type="GO" id="GO:0008176">
    <property type="term" value="F:tRNA (guanine(46)-N7)-methyltransferase activity"/>
    <property type="evidence" value="ECO:0007669"/>
    <property type="project" value="UniProtKB-UniRule"/>
</dbReference>
<dbReference type="CDD" id="cd02440">
    <property type="entry name" value="AdoMet_MTases"/>
    <property type="match status" value="1"/>
</dbReference>
<dbReference type="FunFam" id="3.40.50.150:FF:000035">
    <property type="entry name" value="tRNA (guanine-N(7)-)-methyltransferase"/>
    <property type="match status" value="1"/>
</dbReference>
<dbReference type="Gene3D" id="3.40.50.150">
    <property type="entry name" value="Vaccinia Virus protein VP39"/>
    <property type="match status" value="1"/>
</dbReference>
<dbReference type="HAMAP" id="MF_01057">
    <property type="entry name" value="tRNA_methyltr_TrmB"/>
    <property type="match status" value="1"/>
</dbReference>
<dbReference type="InterPro" id="IPR029063">
    <property type="entry name" value="SAM-dependent_MTases_sf"/>
</dbReference>
<dbReference type="InterPro" id="IPR003358">
    <property type="entry name" value="tRNA_(Gua-N-7)_MeTrfase_Trmb"/>
</dbReference>
<dbReference type="InterPro" id="IPR055361">
    <property type="entry name" value="tRNA_methyltr_TrmB_bact"/>
</dbReference>
<dbReference type="NCBIfam" id="NF001080">
    <property type="entry name" value="PRK00121.2-2"/>
    <property type="match status" value="1"/>
</dbReference>
<dbReference type="NCBIfam" id="TIGR00091">
    <property type="entry name" value="tRNA (guanosine(46)-N7)-methyltransferase TrmB"/>
    <property type="match status" value="1"/>
</dbReference>
<dbReference type="PANTHER" id="PTHR23417">
    <property type="entry name" value="3-DEOXY-D-MANNO-OCTULOSONIC-ACID TRANSFERASE/TRNA GUANINE-N 7 - -METHYLTRANSFERASE"/>
    <property type="match status" value="1"/>
</dbReference>
<dbReference type="PANTHER" id="PTHR23417:SF14">
    <property type="entry name" value="PENTACOTRIPEPTIDE-REPEAT REGION OF PRORP DOMAIN-CONTAINING PROTEIN"/>
    <property type="match status" value="1"/>
</dbReference>
<dbReference type="Pfam" id="PF02390">
    <property type="entry name" value="Methyltransf_4"/>
    <property type="match status" value="1"/>
</dbReference>
<dbReference type="SUPFAM" id="SSF53335">
    <property type="entry name" value="S-adenosyl-L-methionine-dependent methyltransferases"/>
    <property type="match status" value="1"/>
</dbReference>
<dbReference type="PROSITE" id="PS51625">
    <property type="entry name" value="SAM_MT_TRMB"/>
    <property type="match status" value="1"/>
</dbReference>
<gene>
    <name evidence="2" type="primary">trmB</name>
    <name type="ordered locus">SMU_416</name>
</gene>
<accession>Q8DVQ4</accession>
<feature type="chain" id="PRO_0000171402" description="tRNA (guanine-N(7)-)-methyltransferase">
    <location>
        <begin position="1"/>
        <end position="211"/>
    </location>
</feature>
<feature type="region of interest" description="Interaction with RNA" evidence="2">
    <location>
        <begin position="124"/>
        <end position="129"/>
    </location>
</feature>
<feature type="active site" evidence="1">
    <location>
        <position position="118"/>
    </location>
</feature>
<feature type="binding site" evidence="2">
    <location>
        <position position="44"/>
    </location>
    <ligand>
        <name>S-adenosyl-L-methionine</name>
        <dbReference type="ChEBI" id="CHEBI:59789"/>
    </ligand>
</feature>
<feature type="binding site" evidence="2">
    <location>
        <position position="69"/>
    </location>
    <ligand>
        <name>S-adenosyl-L-methionine</name>
        <dbReference type="ChEBI" id="CHEBI:59789"/>
    </ligand>
</feature>
<feature type="binding site" evidence="2">
    <location>
        <position position="96"/>
    </location>
    <ligand>
        <name>S-adenosyl-L-methionine</name>
        <dbReference type="ChEBI" id="CHEBI:59789"/>
    </ligand>
</feature>
<feature type="binding site" evidence="2">
    <location>
        <position position="118"/>
    </location>
    <ligand>
        <name>S-adenosyl-L-methionine</name>
        <dbReference type="ChEBI" id="CHEBI:59789"/>
    </ligand>
</feature>
<feature type="binding site" evidence="2">
    <location>
        <position position="122"/>
    </location>
    <ligand>
        <name>substrate</name>
    </ligand>
</feature>
<feature type="binding site" evidence="2">
    <location>
        <position position="154"/>
    </location>
    <ligand>
        <name>substrate</name>
    </ligand>
</feature>
<feature type="binding site" evidence="2">
    <location>
        <begin position="191"/>
        <end position="194"/>
    </location>
    <ligand>
        <name>substrate</name>
    </ligand>
</feature>
<protein>
    <recommendedName>
        <fullName evidence="2">tRNA (guanine-N(7)-)-methyltransferase</fullName>
        <ecNumber evidence="2">2.1.1.33</ecNumber>
    </recommendedName>
    <alternativeName>
        <fullName evidence="2">tRNA (guanine(46)-N(7))-methyltransferase</fullName>
    </alternativeName>
    <alternativeName>
        <fullName evidence="2">tRNA(m7G46)-methyltransferase</fullName>
    </alternativeName>
</protein>
<evidence type="ECO:0000250" key="1"/>
<evidence type="ECO:0000255" key="2">
    <source>
        <dbReference type="HAMAP-Rule" id="MF_01057"/>
    </source>
</evidence>
<sequence length="211" mass="24736">MRVRRRKGAKEHLENNPRYVILKPEEVKGHWQEVFGNDHPIHIEVGSGKGRFITGMAAKNPQINYIGIDIQVSVLSHALDKVLDSQLPNVKLMLADGSSLMHYFADGEIDLLYLNFSDPWPKKRHEKRRLTYKSFLDTYKKILPEKGEIHFKTDNRELFEYSLASFSQYGMILEQVWLDLHASDYENNVMTEYEEKFSQKGQVIYRVEARF</sequence>
<proteinExistence type="inferred from homology"/>